<proteinExistence type="inferred from homology"/>
<protein>
    <recommendedName>
        <fullName>Probable nicotinate-nucleotide adenylyltransferase</fullName>
        <ecNumber>2.7.7.18</ecNumber>
    </recommendedName>
    <alternativeName>
        <fullName>Deamido-NAD(+) diphosphorylase</fullName>
    </alternativeName>
    <alternativeName>
        <fullName>Deamido-NAD(+) pyrophosphorylase</fullName>
    </alternativeName>
    <alternativeName>
        <fullName>Nicotinate mononucleotide adenylyltransferase</fullName>
        <shortName>NaMN adenylyltransferase</shortName>
    </alternativeName>
</protein>
<dbReference type="EC" id="2.7.7.18"/>
<dbReference type="EMBL" id="AE000511">
    <property type="protein sequence ID" value="AAD08379.1"/>
    <property type="molecule type" value="Genomic_DNA"/>
</dbReference>
<dbReference type="PIR" id="A64687">
    <property type="entry name" value="A64687"/>
</dbReference>
<dbReference type="RefSeq" id="NP_208129.1">
    <property type="nucleotide sequence ID" value="NC_000915.1"/>
</dbReference>
<dbReference type="SMR" id="O25895"/>
<dbReference type="FunCoup" id="O25895">
    <property type="interactions" value="257"/>
</dbReference>
<dbReference type="IntAct" id="O25895">
    <property type="interactions" value="7"/>
</dbReference>
<dbReference type="STRING" id="85962.HP_1337"/>
<dbReference type="PaxDb" id="85962-C694_06900"/>
<dbReference type="EnsemblBacteria" id="AAD08379">
    <property type="protein sequence ID" value="AAD08379"/>
    <property type="gene ID" value="HP_1337"/>
</dbReference>
<dbReference type="KEGG" id="hpy:HP_1337"/>
<dbReference type="PATRIC" id="fig|85962.8.peg.1399"/>
<dbReference type="eggNOG" id="COG1057">
    <property type="taxonomic scope" value="Bacteria"/>
</dbReference>
<dbReference type="InParanoid" id="O25895"/>
<dbReference type="OrthoDB" id="5295945at2"/>
<dbReference type="PhylomeDB" id="O25895"/>
<dbReference type="UniPathway" id="UPA00253">
    <property type="reaction ID" value="UER00332"/>
</dbReference>
<dbReference type="Proteomes" id="UP000000429">
    <property type="component" value="Chromosome"/>
</dbReference>
<dbReference type="GO" id="GO:0005524">
    <property type="term" value="F:ATP binding"/>
    <property type="evidence" value="ECO:0007669"/>
    <property type="project" value="UniProtKB-KW"/>
</dbReference>
<dbReference type="GO" id="GO:0004515">
    <property type="term" value="F:nicotinate-nucleotide adenylyltransferase activity"/>
    <property type="evidence" value="ECO:0007669"/>
    <property type="project" value="UniProtKB-UniRule"/>
</dbReference>
<dbReference type="GO" id="GO:0009435">
    <property type="term" value="P:NAD biosynthetic process"/>
    <property type="evidence" value="ECO:0007669"/>
    <property type="project" value="UniProtKB-UniRule"/>
</dbReference>
<dbReference type="CDD" id="cd02165">
    <property type="entry name" value="NMNAT"/>
    <property type="match status" value="1"/>
</dbReference>
<dbReference type="FunFam" id="3.40.50.620:FF:000387">
    <property type="entry name" value="Probable nicotinate-nucleotide adenylyltransferase"/>
    <property type="match status" value="1"/>
</dbReference>
<dbReference type="Gene3D" id="3.40.50.620">
    <property type="entry name" value="HUPs"/>
    <property type="match status" value="1"/>
</dbReference>
<dbReference type="HAMAP" id="MF_00244">
    <property type="entry name" value="NaMN_adenylyltr"/>
    <property type="match status" value="1"/>
</dbReference>
<dbReference type="InterPro" id="IPR004821">
    <property type="entry name" value="Cyt_trans-like"/>
</dbReference>
<dbReference type="InterPro" id="IPR005248">
    <property type="entry name" value="NadD/NMNAT"/>
</dbReference>
<dbReference type="InterPro" id="IPR014729">
    <property type="entry name" value="Rossmann-like_a/b/a_fold"/>
</dbReference>
<dbReference type="NCBIfam" id="TIGR00125">
    <property type="entry name" value="cyt_tran_rel"/>
    <property type="match status" value="1"/>
</dbReference>
<dbReference type="NCBIfam" id="TIGR00482">
    <property type="entry name" value="nicotinate (nicotinamide) nucleotide adenylyltransferase"/>
    <property type="match status" value="1"/>
</dbReference>
<dbReference type="PANTHER" id="PTHR39321">
    <property type="entry name" value="NICOTINATE-NUCLEOTIDE ADENYLYLTRANSFERASE-RELATED"/>
    <property type="match status" value="1"/>
</dbReference>
<dbReference type="PANTHER" id="PTHR39321:SF3">
    <property type="entry name" value="PHOSPHOPANTETHEINE ADENYLYLTRANSFERASE"/>
    <property type="match status" value="1"/>
</dbReference>
<dbReference type="Pfam" id="PF01467">
    <property type="entry name" value="CTP_transf_like"/>
    <property type="match status" value="1"/>
</dbReference>
<dbReference type="SUPFAM" id="SSF52374">
    <property type="entry name" value="Nucleotidylyl transferase"/>
    <property type="match status" value="1"/>
</dbReference>
<keyword id="KW-0067">ATP-binding</keyword>
<keyword id="KW-0520">NAD</keyword>
<keyword id="KW-0547">Nucleotide-binding</keyword>
<keyword id="KW-0548">Nucleotidyltransferase</keyword>
<keyword id="KW-0662">Pyridine nucleotide biosynthesis</keyword>
<keyword id="KW-1185">Reference proteome</keyword>
<keyword id="KW-0808">Transferase</keyword>
<evidence type="ECO:0000250" key="1"/>
<evidence type="ECO:0000305" key="2"/>
<accession>O25895</accession>
<name>NADD_HELPY</name>
<reference key="1">
    <citation type="journal article" date="1997" name="Nature">
        <title>The complete genome sequence of the gastric pathogen Helicobacter pylori.</title>
        <authorList>
            <person name="Tomb J.-F."/>
            <person name="White O."/>
            <person name="Kerlavage A.R."/>
            <person name="Clayton R.A."/>
            <person name="Sutton G.G."/>
            <person name="Fleischmann R.D."/>
            <person name="Ketchum K.A."/>
            <person name="Klenk H.-P."/>
            <person name="Gill S.R."/>
            <person name="Dougherty B.A."/>
            <person name="Nelson K.E."/>
            <person name="Quackenbush J."/>
            <person name="Zhou L."/>
            <person name="Kirkness E.F."/>
            <person name="Peterson S.N."/>
            <person name="Loftus B.J."/>
            <person name="Richardson D.L."/>
            <person name="Dodson R.J."/>
            <person name="Khalak H.G."/>
            <person name="Glodek A."/>
            <person name="McKenney K."/>
            <person name="FitzGerald L.M."/>
            <person name="Lee N."/>
            <person name="Adams M.D."/>
            <person name="Hickey E.K."/>
            <person name="Berg D.E."/>
            <person name="Gocayne J.D."/>
            <person name="Utterback T.R."/>
            <person name="Peterson J.D."/>
            <person name="Kelley J.M."/>
            <person name="Cotton M.D."/>
            <person name="Weidman J.F."/>
            <person name="Fujii C."/>
            <person name="Bowman C."/>
            <person name="Watthey L."/>
            <person name="Wallin E."/>
            <person name="Hayes W.S."/>
            <person name="Borodovsky M."/>
            <person name="Karp P.D."/>
            <person name="Smith H.O."/>
            <person name="Fraser C.M."/>
            <person name="Venter J.C."/>
        </authorList>
    </citation>
    <scope>NUCLEOTIDE SEQUENCE [LARGE SCALE GENOMIC DNA]</scope>
    <source>
        <strain>ATCC 700392 / 26695</strain>
    </source>
</reference>
<sequence>MNTMNSVLKYKELALYGGSFDPLHKAHLAIIEQTLELLPSAKLIVLPAYQNPFKKPCFLDAQTRFKELERALKGIDRVLLSDFEIKQERAVPTIESVLHFQKLYHPQTLYLVIGADCLRHLSSWTNAKELLKRVELVVFERIGYEEIQFKGHYHPLKGIDAPISSSAIRASLGV</sequence>
<feature type="chain" id="PRO_0000181415" description="Probable nicotinate-nucleotide adenylyltransferase">
    <location>
        <begin position="1"/>
        <end position="174"/>
    </location>
</feature>
<organism>
    <name type="scientific">Helicobacter pylori (strain ATCC 700392 / 26695)</name>
    <name type="common">Campylobacter pylori</name>
    <dbReference type="NCBI Taxonomy" id="85962"/>
    <lineage>
        <taxon>Bacteria</taxon>
        <taxon>Pseudomonadati</taxon>
        <taxon>Campylobacterota</taxon>
        <taxon>Epsilonproteobacteria</taxon>
        <taxon>Campylobacterales</taxon>
        <taxon>Helicobacteraceae</taxon>
        <taxon>Helicobacter</taxon>
    </lineage>
</organism>
<gene>
    <name type="primary">nadD</name>
    <name type="ordered locus">HP_1337</name>
</gene>
<comment type="function">
    <text evidence="1">Catalyzes the reversible adenylation of nicotinate mononucleotide (NaMN) to nicotinic acid adenine dinucleotide (NaAD).</text>
</comment>
<comment type="catalytic activity">
    <reaction>
        <text>nicotinate beta-D-ribonucleotide + ATP + H(+) = deamido-NAD(+) + diphosphate</text>
        <dbReference type="Rhea" id="RHEA:22860"/>
        <dbReference type="ChEBI" id="CHEBI:15378"/>
        <dbReference type="ChEBI" id="CHEBI:30616"/>
        <dbReference type="ChEBI" id="CHEBI:33019"/>
        <dbReference type="ChEBI" id="CHEBI:57502"/>
        <dbReference type="ChEBI" id="CHEBI:58437"/>
        <dbReference type="EC" id="2.7.7.18"/>
    </reaction>
</comment>
<comment type="pathway">
    <text>Cofactor biosynthesis; NAD(+) biosynthesis; deamido-NAD(+) from nicotinate D-ribonucleotide: step 1/1.</text>
</comment>
<comment type="similarity">
    <text evidence="2">Belongs to the NadD family.</text>
</comment>